<dbReference type="EMBL" id="CP000830">
    <property type="protein sequence ID" value="ABV92080.1"/>
    <property type="molecule type" value="Genomic_DNA"/>
</dbReference>
<dbReference type="RefSeq" id="WP_012177010.1">
    <property type="nucleotide sequence ID" value="NC_009952.1"/>
</dbReference>
<dbReference type="STRING" id="398580.Dshi_0331"/>
<dbReference type="KEGG" id="dsh:Dshi_0331"/>
<dbReference type="eggNOG" id="COG0759">
    <property type="taxonomic scope" value="Bacteria"/>
</dbReference>
<dbReference type="HOGENOM" id="CLU_144811_5_3_5"/>
<dbReference type="OrthoDB" id="9801753at2"/>
<dbReference type="Proteomes" id="UP000006833">
    <property type="component" value="Chromosome"/>
</dbReference>
<dbReference type="GO" id="GO:0005886">
    <property type="term" value="C:plasma membrane"/>
    <property type="evidence" value="ECO:0007669"/>
    <property type="project" value="UniProtKB-SubCell"/>
</dbReference>
<dbReference type="HAMAP" id="MF_00386">
    <property type="entry name" value="UPF0161_YidD"/>
    <property type="match status" value="1"/>
</dbReference>
<dbReference type="InterPro" id="IPR002696">
    <property type="entry name" value="Membr_insert_effic_factor_YidD"/>
</dbReference>
<dbReference type="NCBIfam" id="TIGR00278">
    <property type="entry name" value="membrane protein insertion efficiency factor YidD"/>
    <property type="match status" value="1"/>
</dbReference>
<dbReference type="PANTHER" id="PTHR33383">
    <property type="entry name" value="MEMBRANE PROTEIN INSERTION EFFICIENCY FACTOR-RELATED"/>
    <property type="match status" value="1"/>
</dbReference>
<dbReference type="PANTHER" id="PTHR33383:SF1">
    <property type="entry name" value="MEMBRANE PROTEIN INSERTION EFFICIENCY FACTOR-RELATED"/>
    <property type="match status" value="1"/>
</dbReference>
<dbReference type="Pfam" id="PF01809">
    <property type="entry name" value="YidD"/>
    <property type="match status" value="1"/>
</dbReference>
<dbReference type="SMART" id="SM01234">
    <property type="entry name" value="Haemolytic"/>
    <property type="match status" value="1"/>
</dbReference>
<reference key="1">
    <citation type="journal article" date="2010" name="ISME J.">
        <title>The complete genome sequence of the algal symbiont Dinoroseobacter shibae: a hitchhiker's guide to life in the sea.</title>
        <authorList>
            <person name="Wagner-Dobler I."/>
            <person name="Ballhausen B."/>
            <person name="Berger M."/>
            <person name="Brinkhoff T."/>
            <person name="Buchholz I."/>
            <person name="Bunk B."/>
            <person name="Cypionka H."/>
            <person name="Daniel R."/>
            <person name="Drepper T."/>
            <person name="Gerdts G."/>
            <person name="Hahnke S."/>
            <person name="Han C."/>
            <person name="Jahn D."/>
            <person name="Kalhoefer D."/>
            <person name="Kiss H."/>
            <person name="Klenk H.P."/>
            <person name="Kyrpides N."/>
            <person name="Liebl W."/>
            <person name="Liesegang H."/>
            <person name="Meincke L."/>
            <person name="Pati A."/>
            <person name="Petersen J."/>
            <person name="Piekarski T."/>
            <person name="Pommerenke C."/>
            <person name="Pradella S."/>
            <person name="Pukall R."/>
            <person name="Rabus R."/>
            <person name="Stackebrandt E."/>
            <person name="Thole S."/>
            <person name="Thompson L."/>
            <person name="Tielen P."/>
            <person name="Tomasch J."/>
            <person name="von Jan M."/>
            <person name="Wanphrut N."/>
            <person name="Wichels A."/>
            <person name="Zech H."/>
            <person name="Simon M."/>
        </authorList>
    </citation>
    <scope>NUCLEOTIDE SEQUENCE [LARGE SCALE GENOMIC DNA]</scope>
    <source>
        <strain>DSM 16493 / NCIMB 14021 / DFL 12</strain>
    </source>
</reference>
<protein>
    <recommendedName>
        <fullName evidence="1">Putative membrane protein insertion efficiency factor</fullName>
    </recommendedName>
</protein>
<organism>
    <name type="scientific">Dinoroseobacter shibae (strain DSM 16493 / NCIMB 14021 / DFL 12)</name>
    <dbReference type="NCBI Taxonomy" id="398580"/>
    <lineage>
        <taxon>Bacteria</taxon>
        <taxon>Pseudomonadati</taxon>
        <taxon>Pseudomonadota</taxon>
        <taxon>Alphaproteobacteria</taxon>
        <taxon>Rhodobacterales</taxon>
        <taxon>Roseobacteraceae</taxon>
        <taxon>Dinoroseobacter</taxon>
    </lineage>
</organism>
<feature type="chain" id="PRO_1000080188" description="Putative membrane protein insertion efficiency factor">
    <location>
        <begin position="1"/>
        <end position="73"/>
    </location>
</feature>
<comment type="function">
    <text evidence="1">Could be involved in insertion of integral membrane proteins into the membrane.</text>
</comment>
<comment type="subcellular location">
    <subcellularLocation>
        <location evidence="1">Cell inner membrane</location>
        <topology evidence="1">Peripheral membrane protein</topology>
        <orientation evidence="1">Cytoplasmic side</orientation>
    </subcellularLocation>
</comment>
<comment type="similarity">
    <text evidence="1">Belongs to the UPF0161 family.</text>
</comment>
<name>YIDD_DINSH</name>
<accession>A8LMA3</accession>
<gene>
    <name type="ordered locus">Dshi_0331</name>
</gene>
<keyword id="KW-0997">Cell inner membrane</keyword>
<keyword id="KW-1003">Cell membrane</keyword>
<keyword id="KW-0472">Membrane</keyword>
<keyword id="KW-1185">Reference proteome</keyword>
<sequence>MSPLAWLLSLPVRAYRLIFSPWVGFNCRYDPTCSAYAMEALRKHGGVKGGWLTLRRILRCHPWGGTGVDDVPD</sequence>
<proteinExistence type="inferred from homology"/>
<evidence type="ECO:0000255" key="1">
    <source>
        <dbReference type="HAMAP-Rule" id="MF_00386"/>
    </source>
</evidence>